<organism>
    <name type="scientific">Huperzia lucidula</name>
    <name type="common">Shining clubmoss</name>
    <name type="synonym">Lycopodium lucidulum</name>
    <dbReference type="NCBI Taxonomy" id="37429"/>
    <lineage>
        <taxon>Eukaryota</taxon>
        <taxon>Viridiplantae</taxon>
        <taxon>Streptophyta</taxon>
        <taxon>Embryophyta</taxon>
        <taxon>Tracheophyta</taxon>
        <taxon>Lycopodiopsida</taxon>
        <taxon>Lycopodiales</taxon>
        <taxon>Lycopodiaceae</taxon>
        <taxon>Huperzioideae</taxon>
        <taxon>Huperzia</taxon>
    </lineage>
</organism>
<gene>
    <name evidence="1" type="primary">psbN</name>
</gene>
<feature type="chain" id="PRO_0000207907" description="Protein PsbN">
    <location>
        <begin position="1"/>
        <end position="43"/>
    </location>
</feature>
<feature type="transmembrane region" description="Helical" evidence="1">
    <location>
        <begin position="7"/>
        <end position="27"/>
    </location>
</feature>
<protein>
    <recommendedName>
        <fullName evidence="1">Protein PsbN</fullName>
    </recommendedName>
</protein>
<reference key="1">
    <citation type="journal article" date="2005" name="Gene">
        <title>The first complete chloroplast genome sequence of a lycophyte, Huperzia lucidula (Lycopodiaceae).</title>
        <authorList>
            <person name="Wolf P.G."/>
            <person name="Karol K.G."/>
            <person name="Mandoli D.F."/>
            <person name="Kuehl J.V."/>
            <person name="Arumuganathan K."/>
            <person name="Ellis M.W."/>
            <person name="Mishler B.D."/>
            <person name="Kelch D.G."/>
            <person name="Olmstead R.G."/>
            <person name="Boore J.L."/>
        </authorList>
    </citation>
    <scope>NUCLEOTIDE SEQUENCE [LARGE SCALE GENOMIC DNA]</scope>
</reference>
<comment type="function">
    <text evidence="1">May play a role in photosystem I and II biogenesis.</text>
</comment>
<comment type="subcellular location">
    <subcellularLocation>
        <location evidence="1">Plastid</location>
        <location evidence="1">Chloroplast thylakoid membrane</location>
        <topology evidence="1">Single-pass membrane protein</topology>
    </subcellularLocation>
</comment>
<comment type="similarity">
    <text evidence="1">Belongs to the PsbN family.</text>
</comment>
<comment type="caution">
    <text evidence="1">Originally thought to be a component of PSII; based on experiments in Synechocystis, N.tabacum and barley, and its absence from PSII in T.elongatus and T.vulcanus, this is probably not true.</text>
</comment>
<accession>Q5SD31</accession>
<sequence>METATLVAIFISCLLVSFTGYALYTAFGQPSRELRDPFEEHED</sequence>
<proteinExistence type="inferred from homology"/>
<dbReference type="EMBL" id="AY660566">
    <property type="protein sequence ID" value="AAT80697.1"/>
    <property type="molecule type" value="Genomic_DNA"/>
</dbReference>
<dbReference type="RefSeq" id="YP_209501.1">
    <property type="nucleotide sequence ID" value="NC_006861.1"/>
</dbReference>
<dbReference type="SMR" id="Q5SD31"/>
<dbReference type="GeneID" id="3283782"/>
<dbReference type="GO" id="GO:0009535">
    <property type="term" value="C:chloroplast thylakoid membrane"/>
    <property type="evidence" value="ECO:0007669"/>
    <property type="project" value="UniProtKB-SubCell"/>
</dbReference>
<dbReference type="GO" id="GO:0015979">
    <property type="term" value="P:photosynthesis"/>
    <property type="evidence" value="ECO:0007669"/>
    <property type="project" value="InterPro"/>
</dbReference>
<dbReference type="HAMAP" id="MF_00293">
    <property type="entry name" value="PSII_PsbN"/>
    <property type="match status" value="1"/>
</dbReference>
<dbReference type="InterPro" id="IPR003398">
    <property type="entry name" value="PSII_PsbN"/>
</dbReference>
<dbReference type="PANTHER" id="PTHR35326">
    <property type="entry name" value="PROTEIN PSBN"/>
    <property type="match status" value="1"/>
</dbReference>
<dbReference type="PANTHER" id="PTHR35326:SF3">
    <property type="entry name" value="PROTEIN PSBN"/>
    <property type="match status" value="1"/>
</dbReference>
<dbReference type="Pfam" id="PF02468">
    <property type="entry name" value="PsbN"/>
    <property type="match status" value="1"/>
</dbReference>
<keyword id="KW-0150">Chloroplast</keyword>
<keyword id="KW-0472">Membrane</keyword>
<keyword id="KW-0934">Plastid</keyword>
<keyword id="KW-0793">Thylakoid</keyword>
<keyword id="KW-0812">Transmembrane</keyword>
<keyword id="KW-1133">Transmembrane helix</keyword>
<geneLocation type="chloroplast"/>
<name>PSBN_HUPLU</name>
<evidence type="ECO:0000255" key="1">
    <source>
        <dbReference type="HAMAP-Rule" id="MF_00293"/>
    </source>
</evidence>